<name>RSMG_LEPBJ</name>
<gene>
    <name type="primary">rsmG</name>
    <name type="ordered locus">LBJ_0031</name>
</gene>
<accession>Q04WD4</accession>
<organism>
    <name type="scientific">Leptospira borgpetersenii serovar Hardjo-bovis (strain JB197)</name>
    <dbReference type="NCBI Taxonomy" id="355277"/>
    <lineage>
        <taxon>Bacteria</taxon>
        <taxon>Pseudomonadati</taxon>
        <taxon>Spirochaetota</taxon>
        <taxon>Spirochaetia</taxon>
        <taxon>Leptospirales</taxon>
        <taxon>Leptospiraceae</taxon>
        <taxon>Leptospira</taxon>
    </lineage>
</organism>
<keyword id="KW-0963">Cytoplasm</keyword>
<keyword id="KW-0489">Methyltransferase</keyword>
<keyword id="KW-0698">rRNA processing</keyword>
<keyword id="KW-0949">S-adenosyl-L-methionine</keyword>
<keyword id="KW-0808">Transferase</keyword>
<sequence>MQDPEKFSIESIKERLKERFPKEMDEIIYFFDLELICKFTLFLKEKNEVGGFFSKRDSMEILDRHVLESIYHVYRITKKIGSWKGIQLGDAGTGPGIPGFFFRCLKAYPVVVLIDSQKRKLSHTESFVRSNRITDLKFQFIRTEESKLSLNYVVSRGFIPYPYSVEAVSNLIKIGGTYVPFLGKHDIDVKLEEKVLSYSGFRLESSEDLSSLEFLGMRHIKFLKKISSPRHGYPRTWKDISKESKSGNGKDRID</sequence>
<dbReference type="EC" id="2.1.1.-"/>
<dbReference type="EMBL" id="CP000350">
    <property type="protein sequence ID" value="ABJ74786.1"/>
    <property type="molecule type" value="Genomic_DNA"/>
</dbReference>
<dbReference type="RefSeq" id="WP_011671196.1">
    <property type="nucleotide sequence ID" value="NC_008510.1"/>
</dbReference>
<dbReference type="SMR" id="Q04WD4"/>
<dbReference type="KEGG" id="lbj:LBJ_0031"/>
<dbReference type="HOGENOM" id="CLU_1093258_0_0_12"/>
<dbReference type="Proteomes" id="UP000000656">
    <property type="component" value="Chromosome 1"/>
</dbReference>
<dbReference type="GO" id="GO:0005829">
    <property type="term" value="C:cytosol"/>
    <property type="evidence" value="ECO:0007669"/>
    <property type="project" value="TreeGrafter"/>
</dbReference>
<dbReference type="GO" id="GO:0070043">
    <property type="term" value="F:rRNA (guanine-N7-)-methyltransferase activity"/>
    <property type="evidence" value="ECO:0007669"/>
    <property type="project" value="UniProtKB-UniRule"/>
</dbReference>
<dbReference type="Gene3D" id="3.40.50.150">
    <property type="entry name" value="Vaccinia Virus protein VP39"/>
    <property type="match status" value="1"/>
</dbReference>
<dbReference type="InterPro" id="IPR003682">
    <property type="entry name" value="rRNA_ssu_MeTfrase_G"/>
</dbReference>
<dbReference type="InterPro" id="IPR029063">
    <property type="entry name" value="SAM-dependent_MTases_sf"/>
</dbReference>
<dbReference type="PANTHER" id="PTHR31760">
    <property type="entry name" value="S-ADENOSYL-L-METHIONINE-DEPENDENT METHYLTRANSFERASES SUPERFAMILY PROTEIN"/>
    <property type="match status" value="1"/>
</dbReference>
<dbReference type="PANTHER" id="PTHR31760:SF0">
    <property type="entry name" value="S-ADENOSYL-L-METHIONINE-DEPENDENT METHYLTRANSFERASES SUPERFAMILY PROTEIN"/>
    <property type="match status" value="1"/>
</dbReference>
<dbReference type="Pfam" id="PF02527">
    <property type="entry name" value="GidB"/>
    <property type="match status" value="1"/>
</dbReference>
<dbReference type="PIRSF" id="PIRSF003078">
    <property type="entry name" value="GidB"/>
    <property type="match status" value="1"/>
</dbReference>
<dbReference type="SUPFAM" id="SSF53335">
    <property type="entry name" value="S-adenosyl-L-methionine-dependent methyltransferases"/>
    <property type="match status" value="1"/>
</dbReference>
<proteinExistence type="inferred from homology"/>
<protein>
    <recommendedName>
        <fullName>Ribosomal RNA small subunit methyltransferase G</fullName>
        <ecNumber>2.1.1.-</ecNumber>
    </recommendedName>
    <alternativeName>
        <fullName>16S rRNA 7-methylguanosine methyltransferase</fullName>
        <shortName>16S rRNA m7G methyltransferase</shortName>
    </alternativeName>
</protein>
<comment type="function">
    <text evidence="1">Specifically methylates the N7 position of a guanine in 16S rRNA.</text>
</comment>
<comment type="subcellular location">
    <subcellularLocation>
        <location evidence="2">Cytoplasm</location>
    </subcellularLocation>
</comment>
<comment type="similarity">
    <text evidence="2">Belongs to the methyltransferase superfamily. RNA methyltransferase RsmG family.</text>
</comment>
<reference key="1">
    <citation type="journal article" date="2006" name="Proc. Natl. Acad. Sci. U.S.A.">
        <title>Genome reduction in Leptospira borgpetersenii reflects limited transmission potential.</title>
        <authorList>
            <person name="Bulach D.M."/>
            <person name="Zuerner R.L."/>
            <person name="Wilson P."/>
            <person name="Seemann T."/>
            <person name="McGrath A."/>
            <person name="Cullen P.A."/>
            <person name="Davis J."/>
            <person name="Johnson M."/>
            <person name="Kuczek E."/>
            <person name="Alt D.P."/>
            <person name="Peterson-Burch B."/>
            <person name="Coppel R.L."/>
            <person name="Rood J.I."/>
            <person name="Davies J.K."/>
            <person name="Adler B."/>
        </authorList>
    </citation>
    <scope>NUCLEOTIDE SEQUENCE [LARGE SCALE GENOMIC DNA]</scope>
    <source>
        <strain>JB197</strain>
    </source>
</reference>
<feature type="chain" id="PRO_0000342920" description="Ribosomal RNA small subunit methyltransferase G">
    <location>
        <begin position="1"/>
        <end position="254"/>
    </location>
</feature>
<feature type="binding site" evidence="1">
    <location>
        <position position="92"/>
    </location>
    <ligand>
        <name>S-adenosyl-L-methionine</name>
        <dbReference type="ChEBI" id="CHEBI:59789"/>
    </ligand>
</feature>
<feature type="binding site" evidence="1">
    <location>
        <position position="156"/>
    </location>
    <ligand>
        <name>S-adenosyl-L-methionine</name>
        <dbReference type="ChEBI" id="CHEBI:59789"/>
    </ligand>
</feature>
<evidence type="ECO:0000250" key="1"/>
<evidence type="ECO:0000305" key="2"/>